<dbReference type="EMBL" id="AL132969">
    <property type="protein sequence ID" value="CAB86890.1"/>
    <property type="molecule type" value="Genomic_DNA"/>
</dbReference>
<dbReference type="EMBL" id="CP002686">
    <property type="protein sequence ID" value="AEE79001.1"/>
    <property type="molecule type" value="Genomic_DNA"/>
</dbReference>
<dbReference type="EMBL" id="BT005037">
    <property type="protein sequence ID" value="AAO50570.1"/>
    <property type="molecule type" value="mRNA"/>
</dbReference>
<dbReference type="EMBL" id="AK117706">
    <property type="protein sequence ID" value="BAC42357.1"/>
    <property type="molecule type" value="mRNA"/>
</dbReference>
<dbReference type="PIR" id="T47543">
    <property type="entry name" value="T47543"/>
</dbReference>
<dbReference type="RefSeq" id="NP_190854.1">
    <property type="nucleotide sequence ID" value="NM_115146.6"/>
</dbReference>
<dbReference type="SMR" id="Q9LFA5"/>
<dbReference type="FunCoup" id="Q9LFA5">
    <property type="interactions" value="298"/>
</dbReference>
<dbReference type="IntAct" id="Q9LFA5">
    <property type="interactions" value="1"/>
</dbReference>
<dbReference type="STRING" id="3702.Q9LFA5"/>
<dbReference type="iPTMnet" id="Q9LFA5"/>
<dbReference type="PaxDb" id="3702-AT3G52860.1"/>
<dbReference type="ProteomicsDB" id="238254"/>
<dbReference type="EnsemblPlants" id="AT3G52860.1">
    <property type="protein sequence ID" value="AT3G52860.1"/>
    <property type="gene ID" value="AT3G52860"/>
</dbReference>
<dbReference type="GeneID" id="824452"/>
<dbReference type="Gramene" id="AT3G52860.1">
    <property type="protein sequence ID" value="AT3G52860.1"/>
    <property type="gene ID" value="AT3G52860"/>
</dbReference>
<dbReference type="KEGG" id="ath:AT3G52860"/>
<dbReference type="Araport" id="AT3G52860"/>
<dbReference type="TAIR" id="AT3G52860">
    <property type="gene designation" value="MED28"/>
</dbReference>
<dbReference type="eggNOG" id="ENOG502RZ9Y">
    <property type="taxonomic scope" value="Eukaryota"/>
</dbReference>
<dbReference type="HOGENOM" id="CLU_1789747_0_0_1"/>
<dbReference type="InParanoid" id="Q9LFA5"/>
<dbReference type="OMA" id="EDMISWV"/>
<dbReference type="OrthoDB" id="1885414at2759"/>
<dbReference type="PhylomeDB" id="Q9LFA5"/>
<dbReference type="PRO" id="PR:Q9LFA5"/>
<dbReference type="Proteomes" id="UP000006548">
    <property type="component" value="Chromosome 3"/>
</dbReference>
<dbReference type="ExpressionAtlas" id="Q9LFA5">
    <property type="expression patterns" value="baseline and differential"/>
</dbReference>
<dbReference type="GO" id="GO:0016592">
    <property type="term" value="C:mediator complex"/>
    <property type="evidence" value="ECO:0000314"/>
    <property type="project" value="UniProtKB"/>
</dbReference>
<dbReference type="GO" id="GO:0006355">
    <property type="term" value="P:regulation of DNA-templated transcription"/>
    <property type="evidence" value="ECO:0007669"/>
    <property type="project" value="InterPro"/>
</dbReference>
<dbReference type="GO" id="GO:1900055">
    <property type="term" value="P:regulation of leaf senescence"/>
    <property type="evidence" value="ECO:0000315"/>
    <property type="project" value="TAIR"/>
</dbReference>
<dbReference type="InterPro" id="IPR034456">
    <property type="entry name" value="MED28"/>
</dbReference>
<dbReference type="InterPro" id="IPR021640">
    <property type="entry name" value="Mediator_Med28"/>
</dbReference>
<dbReference type="PANTHER" id="PTHR39117">
    <property type="entry name" value="MEDIATOR OF RNA POLYMERASE II TRANSCRIPTION SUBUNIT 28"/>
    <property type="match status" value="1"/>
</dbReference>
<dbReference type="PANTHER" id="PTHR39117:SF1">
    <property type="entry name" value="MEDIATOR OF RNA POLYMERASE II TRANSCRIPTION SUBUNIT 28"/>
    <property type="match status" value="1"/>
</dbReference>
<dbReference type="Pfam" id="PF11594">
    <property type="entry name" value="Med28"/>
    <property type="match status" value="1"/>
</dbReference>
<gene>
    <name evidence="5" type="primary">MED28</name>
    <name evidence="6" type="synonym">MED28_1</name>
    <name evidence="8" type="ordered locus">At3g52860</name>
    <name evidence="9" type="ORF">F8J2.30</name>
</gene>
<sequence length="156" mass="17961">MDYQQKPPQSSDPSPSPPDRPPGIRSPETPSNNQNNDIEDIMACVTALEAALLPCLPARELQAIDRSPHPSHQIDVERHARDFMEAAKKLQLYFMGLKREDRAPSRAESLKKDIAVMEEELKTKDELIKKHMRLFQESQKLVKEQIEKHRDELEKV</sequence>
<keyword id="KW-0175">Coiled coil</keyword>
<keyword id="KW-0539">Nucleus</keyword>
<keyword id="KW-1185">Reference proteome</keyword>
<keyword id="KW-0804">Transcription</keyword>
<keyword id="KW-0805">Transcription regulation</keyword>
<reference key="1">
    <citation type="journal article" date="2000" name="Nature">
        <title>Sequence and analysis of chromosome 3 of the plant Arabidopsis thaliana.</title>
        <authorList>
            <person name="Salanoubat M."/>
            <person name="Lemcke K."/>
            <person name="Rieger M."/>
            <person name="Ansorge W."/>
            <person name="Unseld M."/>
            <person name="Fartmann B."/>
            <person name="Valle G."/>
            <person name="Bloecker H."/>
            <person name="Perez-Alonso M."/>
            <person name="Obermaier B."/>
            <person name="Delseny M."/>
            <person name="Boutry M."/>
            <person name="Grivell L.A."/>
            <person name="Mache R."/>
            <person name="Puigdomenech P."/>
            <person name="De Simone V."/>
            <person name="Choisne N."/>
            <person name="Artiguenave F."/>
            <person name="Robert C."/>
            <person name="Brottier P."/>
            <person name="Wincker P."/>
            <person name="Cattolico L."/>
            <person name="Weissenbach J."/>
            <person name="Saurin W."/>
            <person name="Quetier F."/>
            <person name="Schaefer M."/>
            <person name="Mueller-Auer S."/>
            <person name="Gabel C."/>
            <person name="Fuchs M."/>
            <person name="Benes V."/>
            <person name="Wurmbach E."/>
            <person name="Drzonek H."/>
            <person name="Erfle H."/>
            <person name="Jordan N."/>
            <person name="Bangert S."/>
            <person name="Wiedelmann R."/>
            <person name="Kranz H."/>
            <person name="Voss H."/>
            <person name="Holland R."/>
            <person name="Brandt P."/>
            <person name="Nyakatura G."/>
            <person name="Vezzi A."/>
            <person name="D'Angelo M."/>
            <person name="Pallavicini A."/>
            <person name="Toppo S."/>
            <person name="Simionati B."/>
            <person name="Conrad A."/>
            <person name="Hornischer K."/>
            <person name="Kauer G."/>
            <person name="Loehnert T.-H."/>
            <person name="Nordsiek G."/>
            <person name="Reichelt J."/>
            <person name="Scharfe M."/>
            <person name="Schoen O."/>
            <person name="Bargues M."/>
            <person name="Terol J."/>
            <person name="Climent J."/>
            <person name="Navarro P."/>
            <person name="Collado C."/>
            <person name="Perez-Perez A."/>
            <person name="Ottenwaelder B."/>
            <person name="Duchemin D."/>
            <person name="Cooke R."/>
            <person name="Laudie M."/>
            <person name="Berger-Llauro C."/>
            <person name="Purnelle B."/>
            <person name="Masuy D."/>
            <person name="de Haan M."/>
            <person name="Maarse A.C."/>
            <person name="Alcaraz J.-P."/>
            <person name="Cottet A."/>
            <person name="Casacuberta E."/>
            <person name="Monfort A."/>
            <person name="Argiriou A."/>
            <person name="Flores M."/>
            <person name="Liguori R."/>
            <person name="Vitale D."/>
            <person name="Mannhaupt G."/>
            <person name="Haase D."/>
            <person name="Schoof H."/>
            <person name="Rudd S."/>
            <person name="Zaccaria P."/>
            <person name="Mewes H.-W."/>
            <person name="Mayer K.F.X."/>
            <person name="Kaul S."/>
            <person name="Town C.D."/>
            <person name="Koo H.L."/>
            <person name="Tallon L.J."/>
            <person name="Jenkins J."/>
            <person name="Rooney T."/>
            <person name="Rizzo M."/>
            <person name="Walts A."/>
            <person name="Utterback T."/>
            <person name="Fujii C.Y."/>
            <person name="Shea T.P."/>
            <person name="Creasy T.H."/>
            <person name="Haas B."/>
            <person name="Maiti R."/>
            <person name="Wu D."/>
            <person name="Peterson J."/>
            <person name="Van Aken S."/>
            <person name="Pai G."/>
            <person name="Militscher J."/>
            <person name="Sellers P."/>
            <person name="Gill J.E."/>
            <person name="Feldblyum T.V."/>
            <person name="Preuss D."/>
            <person name="Lin X."/>
            <person name="Nierman W.C."/>
            <person name="Salzberg S.L."/>
            <person name="White O."/>
            <person name="Venter J.C."/>
            <person name="Fraser C.M."/>
            <person name="Kaneko T."/>
            <person name="Nakamura Y."/>
            <person name="Sato S."/>
            <person name="Kato T."/>
            <person name="Asamizu E."/>
            <person name="Sasamoto S."/>
            <person name="Kimura T."/>
            <person name="Idesawa K."/>
            <person name="Kawashima K."/>
            <person name="Kishida Y."/>
            <person name="Kiyokawa C."/>
            <person name="Kohara M."/>
            <person name="Matsumoto M."/>
            <person name="Matsuno A."/>
            <person name="Muraki A."/>
            <person name="Nakayama S."/>
            <person name="Nakazaki N."/>
            <person name="Shinpo S."/>
            <person name="Takeuchi C."/>
            <person name="Wada T."/>
            <person name="Watanabe A."/>
            <person name="Yamada M."/>
            <person name="Yasuda M."/>
            <person name="Tabata S."/>
        </authorList>
    </citation>
    <scope>NUCLEOTIDE SEQUENCE [LARGE SCALE GENOMIC DNA]</scope>
    <source>
        <strain>cv. Columbia</strain>
    </source>
</reference>
<reference key="2">
    <citation type="journal article" date="2017" name="Plant J.">
        <title>Araport11: a complete reannotation of the Arabidopsis thaliana reference genome.</title>
        <authorList>
            <person name="Cheng C.Y."/>
            <person name="Krishnakumar V."/>
            <person name="Chan A.P."/>
            <person name="Thibaud-Nissen F."/>
            <person name="Schobel S."/>
            <person name="Town C.D."/>
        </authorList>
    </citation>
    <scope>GENOME REANNOTATION</scope>
    <source>
        <strain>cv. Columbia</strain>
    </source>
</reference>
<reference key="3">
    <citation type="journal article" date="2002" name="Science">
        <title>Functional annotation of a full-length Arabidopsis cDNA collection.</title>
        <authorList>
            <person name="Seki M."/>
            <person name="Narusaka M."/>
            <person name="Kamiya A."/>
            <person name="Ishida J."/>
            <person name="Satou M."/>
            <person name="Sakurai T."/>
            <person name="Nakajima M."/>
            <person name="Enju A."/>
            <person name="Akiyama K."/>
            <person name="Oono Y."/>
            <person name="Muramatsu M."/>
            <person name="Hayashizaki Y."/>
            <person name="Kawai J."/>
            <person name="Carninci P."/>
            <person name="Itoh M."/>
            <person name="Ishii Y."/>
            <person name="Arakawa T."/>
            <person name="Shibata K."/>
            <person name="Shinagawa A."/>
            <person name="Shinozaki K."/>
        </authorList>
    </citation>
    <scope>NUCLEOTIDE SEQUENCE [LARGE SCALE MRNA]</scope>
    <source>
        <strain>cv. Columbia</strain>
    </source>
</reference>
<reference key="4">
    <citation type="journal article" date="2003" name="Science">
        <title>Empirical analysis of transcriptional activity in the Arabidopsis genome.</title>
        <authorList>
            <person name="Yamada K."/>
            <person name="Lim J."/>
            <person name="Dale J.M."/>
            <person name="Chen H."/>
            <person name="Shinn P."/>
            <person name="Palm C.J."/>
            <person name="Southwick A.M."/>
            <person name="Wu H.C."/>
            <person name="Kim C.J."/>
            <person name="Nguyen M."/>
            <person name="Pham P.K."/>
            <person name="Cheuk R.F."/>
            <person name="Karlin-Newmann G."/>
            <person name="Liu S.X."/>
            <person name="Lam B."/>
            <person name="Sakano H."/>
            <person name="Wu T."/>
            <person name="Yu G."/>
            <person name="Miranda M."/>
            <person name="Quach H.L."/>
            <person name="Tripp M."/>
            <person name="Chang C.H."/>
            <person name="Lee J.M."/>
            <person name="Toriumi M.J."/>
            <person name="Chan M.M."/>
            <person name="Tang C.C."/>
            <person name="Onodera C.S."/>
            <person name="Deng J.M."/>
            <person name="Akiyama K."/>
            <person name="Ansari Y."/>
            <person name="Arakawa T."/>
            <person name="Banh J."/>
            <person name="Banno F."/>
            <person name="Bowser L."/>
            <person name="Brooks S.Y."/>
            <person name="Carninci P."/>
            <person name="Chao Q."/>
            <person name="Choy N."/>
            <person name="Enju A."/>
            <person name="Goldsmith A.D."/>
            <person name="Gurjal M."/>
            <person name="Hansen N.F."/>
            <person name="Hayashizaki Y."/>
            <person name="Johnson-Hopson C."/>
            <person name="Hsuan V.W."/>
            <person name="Iida K."/>
            <person name="Karnes M."/>
            <person name="Khan S."/>
            <person name="Koesema E."/>
            <person name="Ishida J."/>
            <person name="Jiang P.X."/>
            <person name="Jones T."/>
            <person name="Kawai J."/>
            <person name="Kamiya A."/>
            <person name="Meyers C."/>
            <person name="Nakajima M."/>
            <person name="Narusaka M."/>
            <person name="Seki M."/>
            <person name="Sakurai T."/>
            <person name="Satou M."/>
            <person name="Tamse R."/>
            <person name="Vaysberg M."/>
            <person name="Wallender E.K."/>
            <person name="Wong C."/>
            <person name="Yamamura Y."/>
            <person name="Yuan S."/>
            <person name="Shinozaki K."/>
            <person name="Davis R.W."/>
            <person name="Theologis A."/>
            <person name="Ecker J.R."/>
        </authorList>
    </citation>
    <scope>NUCLEOTIDE SEQUENCE [LARGE SCALE MRNA]</scope>
    <source>
        <strain>cv. Columbia</strain>
    </source>
</reference>
<reference key="5">
    <citation type="journal article" date="2007" name="Mol. Cell">
        <title>Purification of a plant mediator from Arabidopsis thaliana identifies PFT1 as the Med25 subunit.</title>
        <authorList>
            <person name="Baeckstroem S."/>
            <person name="Elfving N."/>
            <person name="Nilsson R."/>
            <person name="Wingsle G."/>
            <person name="Bjoerklund S."/>
        </authorList>
    </citation>
    <scope>IDENTIFICATION BY MASS SPECTROMETRY</scope>
    <scope>SUBUNIT</scope>
    <scope>NOMENCLATURE</scope>
</reference>
<reference key="6">
    <citation type="journal article" date="2011" name="Plant Physiol.">
        <title>The Mediator complex in plants: structure, phylogeny, and expression profiling of representative genes in a dicot (Arabidopsis) and a monocot (rice) during reproduction and abiotic stress.</title>
        <authorList>
            <person name="Mathur S."/>
            <person name="Vyas S."/>
            <person name="Kapoor S."/>
            <person name="Tyagi A.K."/>
        </authorList>
    </citation>
    <scope>IDENTIFICATION</scope>
    <scope>NOMENCLATURE</scope>
</reference>
<reference key="7">
    <citation type="journal article" date="2015" name="Biochem. J.">
        <title>Biochemical and redox characterization of the mediator complex and its associated transcription factor GeBPL, a GLABROUS1 enhancer binding protein.</title>
        <authorList>
            <person name="Shaikhali J."/>
            <person name="Davoine C."/>
            <person name="Braennstroem K."/>
            <person name="Rouhier N."/>
            <person name="Bygdell J."/>
            <person name="Bjoerklund S."/>
            <person name="Wingsle G."/>
        </authorList>
    </citation>
    <scope>SUBUNIT</scope>
    <scope>MUTAGENESIS OF CYS-44 AND CYS-55</scope>
    <scope>INTERACTION WITH GEBPL</scope>
</reference>
<feature type="chain" id="PRO_0000418356" description="Mediator of RNA polymerase II transcription subunit 28">
    <location>
        <begin position="1"/>
        <end position="156"/>
    </location>
</feature>
<feature type="region of interest" description="Disordered" evidence="2">
    <location>
        <begin position="1"/>
        <end position="38"/>
    </location>
</feature>
<feature type="coiled-coil region" evidence="1">
    <location>
        <begin position="104"/>
        <end position="156"/>
    </location>
</feature>
<feature type="mutagenesis site" description="Loss of oligomerization. Loss of oligomerization and dimerization; when associated with S-55." evidence="4">
    <original>C</original>
    <variation>S</variation>
    <location>
        <position position="44"/>
    </location>
</feature>
<feature type="mutagenesis site" description="Loss of oligomerization. Loss of oligomerization and dimerization; when associated with S-44." evidence="4">
    <original>C</original>
    <variation>S</variation>
    <location>
        <position position="55"/>
    </location>
</feature>
<comment type="function">
    <text>Component of the Mediator complex, a coactivator involved in the regulated transcription of nearly all RNA polymerase II-dependent genes. Mediator functions as a bridge to convey information from gene-specific regulatory proteins to the basal RNA polymerase II transcription machinery. The Mediator complex, having a compact conformation in its free form, is recruited to promoters by direct interactions with regulatory proteins and serves for the assembly of a functional pre-initiation complex with RNA polymerase II and the general transcription factors.</text>
</comment>
<comment type="subunit">
    <text evidence="3 4">Dimers (PubMed:25877331). Component of the Mediator complex (PubMed:17560376). Interacts with GEBPL (PubMed:25877331).</text>
</comment>
<comment type="subcellular location">
    <subcellularLocation>
        <location evidence="7">Nucleus</location>
    </subcellularLocation>
</comment>
<comment type="similarity">
    <text evidence="7">Belongs to the Mediator complex subunit 28 family.</text>
</comment>
<protein>
    <recommendedName>
        <fullName evidence="5">Mediator of RNA polymerase II transcription subunit 28</fullName>
    </recommendedName>
</protein>
<proteinExistence type="evidence at protein level"/>
<evidence type="ECO:0000255" key="1"/>
<evidence type="ECO:0000256" key="2">
    <source>
        <dbReference type="SAM" id="MobiDB-lite"/>
    </source>
</evidence>
<evidence type="ECO:0000269" key="3">
    <source>
    </source>
</evidence>
<evidence type="ECO:0000269" key="4">
    <source>
    </source>
</evidence>
<evidence type="ECO:0000303" key="5">
    <source>
    </source>
</evidence>
<evidence type="ECO:0000303" key="6">
    <source>
    </source>
</evidence>
<evidence type="ECO:0000305" key="7"/>
<evidence type="ECO:0000312" key="8">
    <source>
        <dbReference type="Araport" id="AT3G52860"/>
    </source>
</evidence>
<evidence type="ECO:0000312" key="9">
    <source>
        <dbReference type="EMBL" id="CAB86890.1"/>
    </source>
</evidence>
<name>MED28_ARATH</name>
<organism>
    <name type="scientific">Arabidopsis thaliana</name>
    <name type="common">Mouse-ear cress</name>
    <dbReference type="NCBI Taxonomy" id="3702"/>
    <lineage>
        <taxon>Eukaryota</taxon>
        <taxon>Viridiplantae</taxon>
        <taxon>Streptophyta</taxon>
        <taxon>Embryophyta</taxon>
        <taxon>Tracheophyta</taxon>
        <taxon>Spermatophyta</taxon>
        <taxon>Magnoliopsida</taxon>
        <taxon>eudicotyledons</taxon>
        <taxon>Gunneridae</taxon>
        <taxon>Pentapetalae</taxon>
        <taxon>rosids</taxon>
        <taxon>malvids</taxon>
        <taxon>Brassicales</taxon>
        <taxon>Brassicaceae</taxon>
        <taxon>Camelineae</taxon>
        <taxon>Arabidopsis</taxon>
    </lineage>
</organism>
<accession>Q9LFA5</accession>